<protein>
    <recommendedName>
        <fullName evidence="3">Periviscerokinin-1</fullName>
        <shortName evidence="3">EubSp-PVK-1</shortName>
    </recommendedName>
</protein>
<accession>P85626</accession>
<reference evidence="4" key="1">
    <citation type="journal article" date="2009" name="BMC Evol. Biol.">
        <title>A proteomic approach for studying insect phylogeny: CAPA peptides of ancient insect taxa (Dictyoptera, Blattoptera) as a test case.</title>
        <authorList>
            <person name="Roth S."/>
            <person name="Fromm B."/>
            <person name="Gaede G."/>
            <person name="Predel R."/>
        </authorList>
    </citation>
    <scope>PROTEIN SEQUENCE</scope>
    <scope>AMIDATION AT THR-11</scope>
    <source>
        <tissue evidence="2">Abdominal perisympathetic organs</tissue>
    </source>
</reference>
<keyword id="KW-0027">Amidation</keyword>
<keyword id="KW-0903">Direct protein sequencing</keyword>
<keyword id="KW-0527">Neuropeptide</keyword>
<keyword id="KW-0964">Secreted</keyword>
<proteinExistence type="evidence at protein level"/>
<feature type="peptide" id="PRO_0000378742" description="Periviscerokinin-1" evidence="2">
    <location>
        <begin position="1"/>
        <end position="11"/>
    </location>
</feature>
<feature type="modified residue" description="Threonine amide" evidence="2">
    <location>
        <position position="11"/>
    </location>
</feature>
<dbReference type="GO" id="GO:0005576">
    <property type="term" value="C:extracellular region"/>
    <property type="evidence" value="ECO:0007669"/>
    <property type="project" value="UniProtKB-SubCell"/>
</dbReference>
<dbReference type="GO" id="GO:0007218">
    <property type="term" value="P:neuropeptide signaling pathway"/>
    <property type="evidence" value="ECO:0007669"/>
    <property type="project" value="UniProtKB-KW"/>
</dbReference>
<dbReference type="InterPro" id="IPR013231">
    <property type="entry name" value="Periviscerokinin"/>
</dbReference>
<dbReference type="Pfam" id="PF08259">
    <property type="entry name" value="Periviscerokin"/>
    <property type="match status" value="1"/>
</dbReference>
<name>PVK1_EUBSB</name>
<comment type="function">
    <text evidence="4">Mediates visceral muscle contractile activity (myotropic activity).</text>
</comment>
<comment type="subcellular location">
    <subcellularLocation>
        <location evidence="4">Secreted</location>
    </subcellularLocation>
</comment>
<comment type="similarity">
    <text evidence="1">Belongs to the periviscerokinin family.</text>
</comment>
<sequence length="11" mass="1091">GSSGLIPFGRT</sequence>
<evidence type="ECO:0000255" key="1"/>
<evidence type="ECO:0000269" key="2">
    <source>
    </source>
</evidence>
<evidence type="ECO:0000303" key="3">
    <source>
    </source>
</evidence>
<evidence type="ECO:0000305" key="4"/>
<organism>
    <name type="scientific">Eublaberus sp. (strain BF-2008)</name>
    <name type="common">Cockroach</name>
    <dbReference type="NCBI Taxonomy" id="521510"/>
    <lineage>
        <taxon>Eukaryota</taxon>
        <taxon>Metazoa</taxon>
        <taxon>Ecdysozoa</taxon>
        <taxon>Arthropoda</taxon>
        <taxon>Hexapoda</taxon>
        <taxon>Insecta</taxon>
        <taxon>Pterygota</taxon>
        <taxon>Neoptera</taxon>
        <taxon>Polyneoptera</taxon>
        <taxon>Dictyoptera</taxon>
        <taxon>Blattodea</taxon>
        <taxon>Blaberoidea</taxon>
        <taxon>Blaberidae</taxon>
        <taxon>Blaberinae</taxon>
        <taxon>Eublaberus</taxon>
    </lineage>
</organism>